<name>GRPE_PROMM</name>
<protein>
    <recommendedName>
        <fullName evidence="1">Protein GrpE</fullName>
    </recommendedName>
    <alternativeName>
        <fullName evidence="1">HSP-70 cofactor</fullName>
    </alternativeName>
</protein>
<sequence length="237" mass="26050">MSGDAPTPAHDPAAEGLEASVPLESVASINSDEGQSSAQSAPLADNEARLQQLEQEHSSLREEHETLRSQYMRIAADFDNFRKRQSRDQDDLRFQLICTTLSEILPVVDNFERARQQLEPQGEEAQALHRSYQGLYKQLVDVLKQMGVASMRVVGQVFDPTLHEAVSREPSEEHPEDVVTEELQRGYHLNGRVLRHALVKVSMGPGPQSGASPSSAQPNDDSTATFQGEADPAQPGV</sequence>
<dbReference type="EMBL" id="BX548175">
    <property type="protein sequence ID" value="CAE20196.1"/>
    <property type="molecule type" value="Genomic_DNA"/>
</dbReference>
<dbReference type="RefSeq" id="WP_011129400.1">
    <property type="nucleotide sequence ID" value="NC_005071.1"/>
</dbReference>
<dbReference type="SMR" id="Q7V9C9"/>
<dbReference type="KEGG" id="pmt:PMT_0021"/>
<dbReference type="eggNOG" id="COG0576">
    <property type="taxonomic scope" value="Bacteria"/>
</dbReference>
<dbReference type="HOGENOM" id="CLU_057217_5_1_3"/>
<dbReference type="OrthoDB" id="9812586at2"/>
<dbReference type="Proteomes" id="UP000001423">
    <property type="component" value="Chromosome"/>
</dbReference>
<dbReference type="GO" id="GO:0005737">
    <property type="term" value="C:cytoplasm"/>
    <property type="evidence" value="ECO:0007669"/>
    <property type="project" value="UniProtKB-SubCell"/>
</dbReference>
<dbReference type="GO" id="GO:0000774">
    <property type="term" value="F:adenyl-nucleotide exchange factor activity"/>
    <property type="evidence" value="ECO:0007669"/>
    <property type="project" value="InterPro"/>
</dbReference>
<dbReference type="GO" id="GO:0042803">
    <property type="term" value="F:protein homodimerization activity"/>
    <property type="evidence" value="ECO:0007669"/>
    <property type="project" value="InterPro"/>
</dbReference>
<dbReference type="GO" id="GO:0051087">
    <property type="term" value="F:protein-folding chaperone binding"/>
    <property type="evidence" value="ECO:0007669"/>
    <property type="project" value="InterPro"/>
</dbReference>
<dbReference type="GO" id="GO:0051082">
    <property type="term" value="F:unfolded protein binding"/>
    <property type="evidence" value="ECO:0007669"/>
    <property type="project" value="TreeGrafter"/>
</dbReference>
<dbReference type="GO" id="GO:0006457">
    <property type="term" value="P:protein folding"/>
    <property type="evidence" value="ECO:0007669"/>
    <property type="project" value="InterPro"/>
</dbReference>
<dbReference type="CDD" id="cd00446">
    <property type="entry name" value="GrpE"/>
    <property type="match status" value="1"/>
</dbReference>
<dbReference type="FunFam" id="2.30.22.10:FF:000001">
    <property type="entry name" value="Protein GrpE"/>
    <property type="match status" value="1"/>
</dbReference>
<dbReference type="Gene3D" id="3.90.20.20">
    <property type="match status" value="1"/>
</dbReference>
<dbReference type="Gene3D" id="2.30.22.10">
    <property type="entry name" value="Head domain of nucleotide exchange factor GrpE"/>
    <property type="match status" value="1"/>
</dbReference>
<dbReference type="HAMAP" id="MF_01151">
    <property type="entry name" value="GrpE"/>
    <property type="match status" value="1"/>
</dbReference>
<dbReference type="InterPro" id="IPR000740">
    <property type="entry name" value="GrpE"/>
</dbReference>
<dbReference type="InterPro" id="IPR013805">
    <property type="entry name" value="GrpE_coiled_coil"/>
</dbReference>
<dbReference type="InterPro" id="IPR009012">
    <property type="entry name" value="GrpE_head"/>
</dbReference>
<dbReference type="NCBIfam" id="NF010741">
    <property type="entry name" value="PRK14143.1"/>
    <property type="match status" value="1"/>
</dbReference>
<dbReference type="PANTHER" id="PTHR21237">
    <property type="entry name" value="GRPE PROTEIN"/>
    <property type="match status" value="1"/>
</dbReference>
<dbReference type="PANTHER" id="PTHR21237:SF23">
    <property type="entry name" value="GRPE PROTEIN HOMOLOG, MITOCHONDRIAL"/>
    <property type="match status" value="1"/>
</dbReference>
<dbReference type="Pfam" id="PF01025">
    <property type="entry name" value="GrpE"/>
    <property type="match status" value="1"/>
</dbReference>
<dbReference type="PRINTS" id="PR00773">
    <property type="entry name" value="GRPEPROTEIN"/>
</dbReference>
<dbReference type="SUPFAM" id="SSF58014">
    <property type="entry name" value="Coiled-coil domain of nucleotide exchange factor GrpE"/>
    <property type="match status" value="1"/>
</dbReference>
<dbReference type="SUPFAM" id="SSF51064">
    <property type="entry name" value="Head domain of nucleotide exchange factor GrpE"/>
    <property type="match status" value="1"/>
</dbReference>
<dbReference type="PROSITE" id="PS01071">
    <property type="entry name" value="GRPE"/>
    <property type="match status" value="1"/>
</dbReference>
<gene>
    <name evidence="1" type="primary">grpE</name>
    <name type="ordered locus">PMT_0021</name>
</gene>
<comment type="function">
    <text evidence="1">Participates actively in the response to hyperosmotic and heat shock by preventing the aggregation of stress-denatured proteins, in association with DnaK and GrpE. It is the nucleotide exchange factor for DnaK and may function as a thermosensor. Unfolded proteins bind initially to DnaJ; upon interaction with the DnaJ-bound protein, DnaK hydrolyzes its bound ATP, resulting in the formation of a stable complex. GrpE releases ADP from DnaK; ATP binding to DnaK triggers the release of the substrate protein, thus completing the reaction cycle. Several rounds of ATP-dependent interactions between DnaJ, DnaK and GrpE are required for fully efficient folding.</text>
</comment>
<comment type="subunit">
    <text evidence="1">Homodimer.</text>
</comment>
<comment type="subcellular location">
    <subcellularLocation>
        <location evidence="1">Cytoplasm</location>
    </subcellularLocation>
</comment>
<comment type="similarity">
    <text evidence="1">Belongs to the GrpE family.</text>
</comment>
<accession>Q7V9C9</accession>
<organism>
    <name type="scientific">Prochlorococcus marinus (strain MIT 9313)</name>
    <dbReference type="NCBI Taxonomy" id="74547"/>
    <lineage>
        <taxon>Bacteria</taxon>
        <taxon>Bacillati</taxon>
        <taxon>Cyanobacteriota</taxon>
        <taxon>Cyanophyceae</taxon>
        <taxon>Synechococcales</taxon>
        <taxon>Prochlorococcaceae</taxon>
        <taxon>Prochlorococcus</taxon>
    </lineage>
</organism>
<evidence type="ECO:0000255" key="1">
    <source>
        <dbReference type="HAMAP-Rule" id="MF_01151"/>
    </source>
</evidence>
<evidence type="ECO:0000256" key="2">
    <source>
        <dbReference type="SAM" id="MobiDB-lite"/>
    </source>
</evidence>
<proteinExistence type="inferred from homology"/>
<feature type="chain" id="PRO_0000113837" description="Protein GrpE">
    <location>
        <begin position="1"/>
        <end position="237"/>
    </location>
</feature>
<feature type="region of interest" description="Disordered" evidence="2">
    <location>
        <begin position="1"/>
        <end position="52"/>
    </location>
</feature>
<feature type="region of interest" description="Disordered" evidence="2">
    <location>
        <begin position="200"/>
        <end position="237"/>
    </location>
</feature>
<feature type="compositionally biased region" description="Polar residues" evidence="2">
    <location>
        <begin position="27"/>
        <end position="40"/>
    </location>
</feature>
<feature type="compositionally biased region" description="Low complexity" evidence="2">
    <location>
        <begin position="204"/>
        <end position="218"/>
    </location>
</feature>
<reference key="1">
    <citation type="journal article" date="2003" name="Nature">
        <title>Genome divergence in two Prochlorococcus ecotypes reflects oceanic niche differentiation.</title>
        <authorList>
            <person name="Rocap G."/>
            <person name="Larimer F.W."/>
            <person name="Lamerdin J.E."/>
            <person name="Malfatti S."/>
            <person name="Chain P."/>
            <person name="Ahlgren N.A."/>
            <person name="Arellano A."/>
            <person name="Coleman M."/>
            <person name="Hauser L."/>
            <person name="Hess W.R."/>
            <person name="Johnson Z.I."/>
            <person name="Land M.L."/>
            <person name="Lindell D."/>
            <person name="Post A.F."/>
            <person name="Regala W."/>
            <person name="Shah M."/>
            <person name="Shaw S.L."/>
            <person name="Steglich C."/>
            <person name="Sullivan M.B."/>
            <person name="Ting C.S."/>
            <person name="Tolonen A."/>
            <person name="Webb E.A."/>
            <person name="Zinser E.R."/>
            <person name="Chisholm S.W."/>
        </authorList>
    </citation>
    <scope>NUCLEOTIDE SEQUENCE [LARGE SCALE GENOMIC DNA]</scope>
    <source>
        <strain>MIT 9313</strain>
    </source>
</reference>
<keyword id="KW-0143">Chaperone</keyword>
<keyword id="KW-0963">Cytoplasm</keyword>
<keyword id="KW-1185">Reference proteome</keyword>
<keyword id="KW-0346">Stress response</keyword>